<evidence type="ECO:0000255" key="1">
    <source>
        <dbReference type="HAMAP-Rule" id="MF_00178"/>
    </source>
</evidence>
<dbReference type="EC" id="2.5.1.78" evidence="1"/>
<dbReference type="EMBL" id="BA000018">
    <property type="protein sequence ID" value="BAB42854.1"/>
    <property type="molecule type" value="Genomic_DNA"/>
</dbReference>
<dbReference type="PIR" id="A89962">
    <property type="entry name" value="A89962"/>
</dbReference>
<dbReference type="SMR" id="P99141"/>
<dbReference type="EnsemblBacteria" id="BAB42854">
    <property type="protein sequence ID" value="BAB42854"/>
    <property type="gene ID" value="BAB42854"/>
</dbReference>
<dbReference type="KEGG" id="sau:SA1586"/>
<dbReference type="HOGENOM" id="CLU_089358_1_1_9"/>
<dbReference type="UniPathway" id="UPA00275">
    <property type="reaction ID" value="UER00404"/>
</dbReference>
<dbReference type="GO" id="GO:0005829">
    <property type="term" value="C:cytosol"/>
    <property type="evidence" value="ECO:0007669"/>
    <property type="project" value="TreeGrafter"/>
</dbReference>
<dbReference type="GO" id="GO:0009349">
    <property type="term" value="C:riboflavin synthase complex"/>
    <property type="evidence" value="ECO:0007669"/>
    <property type="project" value="InterPro"/>
</dbReference>
<dbReference type="GO" id="GO:0000906">
    <property type="term" value="F:6,7-dimethyl-8-ribityllumazine synthase activity"/>
    <property type="evidence" value="ECO:0007669"/>
    <property type="project" value="UniProtKB-UniRule"/>
</dbReference>
<dbReference type="GO" id="GO:0009231">
    <property type="term" value="P:riboflavin biosynthetic process"/>
    <property type="evidence" value="ECO:0007669"/>
    <property type="project" value="UniProtKB-UniRule"/>
</dbReference>
<dbReference type="CDD" id="cd09209">
    <property type="entry name" value="Lumazine_synthase-I"/>
    <property type="match status" value="1"/>
</dbReference>
<dbReference type="FunFam" id="3.40.50.960:FF:000001">
    <property type="entry name" value="6,7-dimethyl-8-ribityllumazine synthase"/>
    <property type="match status" value="1"/>
</dbReference>
<dbReference type="Gene3D" id="3.40.50.960">
    <property type="entry name" value="Lumazine/riboflavin synthase"/>
    <property type="match status" value="1"/>
</dbReference>
<dbReference type="HAMAP" id="MF_00178">
    <property type="entry name" value="Lumazine_synth"/>
    <property type="match status" value="1"/>
</dbReference>
<dbReference type="InterPro" id="IPR034964">
    <property type="entry name" value="LS"/>
</dbReference>
<dbReference type="InterPro" id="IPR002180">
    <property type="entry name" value="LS/RS"/>
</dbReference>
<dbReference type="InterPro" id="IPR036467">
    <property type="entry name" value="LS/RS_sf"/>
</dbReference>
<dbReference type="NCBIfam" id="TIGR00114">
    <property type="entry name" value="lumazine-synth"/>
    <property type="match status" value="1"/>
</dbReference>
<dbReference type="NCBIfam" id="NF000812">
    <property type="entry name" value="PRK00061.1-4"/>
    <property type="match status" value="1"/>
</dbReference>
<dbReference type="PANTHER" id="PTHR21058:SF0">
    <property type="entry name" value="6,7-DIMETHYL-8-RIBITYLLUMAZINE SYNTHASE"/>
    <property type="match status" value="1"/>
</dbReference>
<dbReference type="PANTHER" id="PTHR21058">
    <property type="entry name" value="6,7-DIMETHYL-8-RIBITYLLUMAZINE SYNTHASE DMRL SYNTHASE LUMAZINE SYNTHASE"/>
    <property type="match status" value="1"/>
</dbReference>
<dbReference type="Pfam" id="PF00885">
    <property type="entry name" value="DMRL_synthase"/>
    <property type="match status" value="1"/>
</dbReference>
<dbReference type="SUPFAM" id="SSF52121">
    <property type="entry name" value="Lumazine synthase"/>
    <property type="match status" value="1"/>
</dbReference>
<comment type="function">
    <text evidence="1">Catalyzes the formation of 6,7-dimethyl-8-ribityllumazine by condensation of 5-amino-6-(D-ribitylamino)uracil with 3,4-dihydroxy-2-butanone 4-phosphate. This is the penultimate step in the biosynthesis of riboflavin.</text>
</comment>
<comment type="catalytic activity">
    <reaction evidence="1">
        <text>(2S)-2-hydroxy-3-oxobutyl phosphate + 5-amino-6-(D-ribitylamino)uracil = 6,7-dimethyl-8-(1-D-ribityl)lumazine + phosphate + 2 H2O + H(+)</text>
        <dbReference type="Rhea" id="RHEA:26152"/>
        <dbReference type="ChEBI" id="CHEBI:15377"/>
        <dbReference type="ChEBI" id="CHEBI:15378"/>
        <dbReference type="ChEBI" id="CHEBI:15934"/>
        <dbReference type="ChEBI" id="CHEBI:43474"/>
        <dbReference type="ChEBI" id="CHEBI:58201"/>
        <dbReference type="ChEBI" id="CHEBI:58830"/>
        <dbReference type="EC" id="2.5.1.78"/>
    </reaction>
</comment>
<comment type="pathway">
    <text evidence="1">Cofactor biosynthesis; riboflavin biosynthesis; riboflavin from 2-hydroxy-3-oxobutyl phosphate and 5-amino-6-(D-ribitylamino)uracil: step 1/2.</text>
</comment>
<comment type="subunit">
    <text evidence="1">Forms an icosahedral capsid composed of 60 subunits, arranged as a dodecamer of pentamers.</text>
</comment>
<comment type="similarity">
    <text evidence="1">Belongs to the DMRL synthase family.</text>
</comment>
<protein>
    <recommendedName>
        <fullName evidence="1">6,7-dimethyl-8-ribityllumazine synthase</fullName>
        <shortName evidence="1">DMRL synthase</shortName>
        <shortName evidence="1">LS</shortName>
        <shortName evidence="1">Lumazine synthase</shortName>
        <ecNumber evidence="1">2.5.1.78</ecNumber>
    </recommendedName>
</protein>
<feature type="chain" id="PRO_0000134806" description="6,7-dimethyl-8-ribityllumazine synthase">
    <location>
        <begin position="1"/>
        <end position="154"/>
    </location>
</feature>
<feature type="active site" description="Proton donor" evidence="1">
    <location>
        <position position="87"/>
    </location>
</feature>
<feature type="binding site" evidence="1">
    <location>
        <position position="21"/>
    </location>
    <ligand>
        <name>5-amino-6-(D-ribitylamino)uracil</name>
        <dbReference type="ChEBI" id="CHEBI:15934"/>
    </ligand>
</feature>
<feature type="binding site" evidence="1">
    <location>
        <begin position="55"/>
        <end position="57"/>
    </location>
    <ligand>
        <name>5-amino-6-(D-ribitylamino)uracil</name>
        <dbReference type="ChEBI" id="CHEBI:15934"/>
    </ligand>
</feature>
<feature type="binding site" evidence="1">
    <location>
        <begin position="79"/>
        <end position="81"/>
    </location>
    <ligand>
        <name>5-amino-6-(D-ribitylamino)uracil</name>
        <dbReference type="ChEBI" id="CHEBI:15934"/>
    </ligand>
</feature>
<feature type="binding site" evidence="1">
    <location>
        <begin position="84"/>
        <end position="85"/>
    </location>
    <ligand>
        <name>(2S)-2-hydroxy-3-oxobutyl phosphate</name>
        <dbReference type="ChEBI" id="CHEBI:58830"/>
    </ligand>
</feature>
<feature type="binding site" evidence="1">
    <location>
        <position position="112"/>
    </location>
    <ligand>
        <name>5-amino-6-(D-ribitylamino)uracil</name>
        <dbReference type="ChEBI" id="CHEBI:15934"/>
    </ligand>
</feature>
<feature type="binding site" evidence="1">
    <location>
        <position position="126"/>
    </location>
    <ligand>
        <name>(2S)-2-hydroxy-3-oxobutyl phosphate</name>
        <dbReference type="ChEBI" id="CHEBI:58830"/>
    </ligand>
</feature>
<gene>
    <name evidence="1" type="primary">ribH</name>
    <name type="ordered locus">SA1586</name>
</gene>
<name>RISB_STAAN</name>
<sequence length="154" mass="16410">MNFEGKLIGKDLKVAIVVSRFNDFITGRLLEGAKDTLIRHDVNEDNIDVAFVPGAFEIPLVAKKLASSGNYDAIITLGCVIRGATSHYDYVCNEVAKGVSKVNDQTNVPVIFGILTTESIEQAVERAGTKAGNKGAEAAVSAIEMANLLKSIKA</sequence>
<reference key="1">
    <citation type="journal article" date="2001" name="Lancet">
        <title>Whole genome sequencing of meticillin-resistant Staphylococcus aureus.</title>
        <authorList>
            <person name="Kuroda M."/>
            <person name="Ohta T."/>
            <person name="Uchiyama I."/>
            <person name="Baba T."/>
            <person name="Yuzawa H."/>
            <person name="Kobayashi I."/>
            <person name="Cui L."/>
            <person name="Oguchi A."/>
            <person name="Aoki K."/>
            <person name="Nagai Y."/>
            <person name="Lian J.-Q."/>
            <person name="Ito T."/>
            <person name="Kanamori M."/>
            <person name="Matsumaru H."/>
            <person name="Maruyama A."/>
            <person name="Murakami H."/>
            <person name="Hosoyama A."/>
            <person name="Mizutani-Ui Y."/>
            <person name="Takahashi N.K."/>
            <person name="Sawano T."/>
            <person name="Inoue R."/>
            <person name="Kaito C."/>
            <person name="Sekimizu K."/>
            <person name="Hirakawa H."/>
            <person name="Kuhara S."/>
            <person name="Goto S."/>
            <person name="Yabuzaki J."/>
            <person name="Kanehisa M."/>
            <person name="Yamashita A."/>
            <person name="Oshima K."/>
            <person name="Furuya K."/>
            <person name="Yoshino C."/>
            <person name="Shiba T."/>
            <person name="Hattori M."/>
            <person name="Ogasawara N."/>
            <person name="Hayashi H."/>
            <person name="Hiramatsu K."/>
        </authorList>
    </citation>
    <scope>NUCLEOTIDE SEQUENCE [LARGE SCALE GENOMIC DNA]</scope>
    <source>
        <strain>N315</strain>
    </source>
</reference>
<reference key="2">
    <citation type="journal article" date="2005" name="J. Microbiol. Methods">
        <title>Correlation of proteomic and transcriptomic profiles of Staphylococcus aureus during the post-exponential phase of growth.</title>
        <authorList>
            <person name="Scherl A."/>
            <person name="Francois P."/>
            <person name="Bento M."/>
            <person name="Deshusses J.M."/>
            <person name="Charbonnier Y."/>
            <person name="Converset V."/>
            <person name="Huyghe A."/>
            <person name="Walter N."/>
            <person name="Hoogland C."/>
            <person name="Appel R.D."/>
            <person name="Sanchez J.-C."/>
            <person name="Zimmermann-Ivol C.G."/>
            <person name="Corthals G.L."/>
            <person name="Hochstrasser D.F."/>
            <person name="Schrenzel J."/>
        </authorList>
    </citation>
    <scope>IDENTIFICATION BY MASS SPECTROMETRY</scope>
    <source>
        <strain>N315</strain>
    </source>
</reference>
<reference key="3">
    <citation type="submission" date="2007-10" db="UniProtKB">
        <title>Shotgun proteomic analysis of total and membrane protein extracts of S. aureus strain N315.</title>
        <authorList>
            <person name="Vaezzadeh A.R."/>
            <person name="Deshusses J."/>
            <person name="Lescuyer P."/>
            <person name="Hochstrasser D.F."/>
        </authorList>
    </citation>
    <scope>IDENTIFICATION BY MASS SPECTROMETRY [LARGE SCALE ANALYSIS]</scope>
    <source>
        <strain>N315</strain>
    </source>
</reference>
<organism>
    <name type="scientific">Staphylococcus aureus (strain N315)</name>
    <dbReference type="NCBI Taxonomy" id="158879"/>
    <lineage>
        <taxon>Bacteria</taxon>
        <taxon>Bacillati</taxon>
        <taxon>Bacillota</taxon>
        <taxon>Bacilli</taxon>
        <taxon>Bacillales</taxon>
        <taxon>Staphylococcaceae</taxon>
        <taxon>Staphylococcus</taxon>
    </lineage>
</organism>
<proteinExistence type="evidence at protein level"/>
<accession>P99141</accession>
<accession>Q931N8</accession>
<accession>Q99TA1</accession>
<keyword id="KW-0686">Riboflavin biosynthesis</keyword>
<keyword id="KW-0808">Transferase</keyword>